<keyword id="KW-0238">DNA-binding</keyword>
<keyword id="KW-0539">Nucleus</keyword>
<keyword id="KW-1185">Reference proteome</keyword>
<keyword id="KW-0804">Transcription</keyword>
<keyword id="KW-0805">Transcription regulation</keyword>
<evidence type="ECO:0000255" key="1">
    <source>
        <dbReference type="PROSITE-ProRule" id="PRU00089"/>
    </source>
</evidence>
<sequence length="101" mass="11799">PAKPPYSYIALITMAILQSPHKRLTLSGICAFISGRFPYYRRKFPAWQNSIRHNLSLNDCFVKIPREPGHPGKGNYWSLDPASQDMFDNGSFLRRRKRFKR</sequence>
<protein>
    <recommendedName>
        <fullName>Forkhead box protein D4</fullName>
    </recommendedName>
    <alternativeName>
        <fullName>Forkhead-related protein FKHL9</fullName>
    </alternativeName>
    <alternativeName>
        <fullName>Forkhead-related transcription factor 5</fullName>
        <shortName>FREAC-5</shortName>
    </alternativeName>
    <alternativeName>
        <fullName>Hepatocyte nuclear factor 3 forkhead homolog 6</fullName>
        <shortName>HFH-6</shortName>
    </alternativeName>
</protein>
<gene>
    <name type="primary">Foxd4</name>
    <name type="synonym">Fkhl9</name>
    <name type="synonym">Freac5</name>
    <name type="synonym">Hfh6</name>
</gene>
<name>FOXD4_RAT</name>
<feature type="chain" id="PRO_0000091823" description="Forkhead box protein D4">
    <location>
        <begin position="1" status="less than"/>
        <end position="101" status="greater than"/>
    </location>
</feature>
<feature type="DNA-binding region" description="Fork-head" evidence="1">
    <location>
        <begin position="2"/>
        <end position="93"/>
    </location>
</feature>
<feature type="non-terminal residue">
    <location>
        <position position="1"/>
    </location>
</feature>
<feature type="non-terminal residue">
    <location>
        <position position="101"/>
    </location>
</feature>
<comment type="subcellular location">
    <subcellularLocation>
        <location>Nucleus</location>
    </subcellularLocation>
</comment>
<dbReference type="EMBL" id="L13206">
    <property type="protein sequence ID" value="AAA41322.1"/>
    <property type="molecule type" value="mRNA"/>
</dbReference>
<dbReference type="PIR" id="I60920">
    <property type="entry name" value="I60920"/>
</dbReference>
<dbReference type="SMR" id="Q63249"/>
<dbReference type="PhosphoSitePlus" id="Q63249"/>
<dbReference type="UCSC" id="RGD:621716">
    <property type="organism name" value="rat"/>
</dbReference>
<dbReference type="AGR" id="RGD:621716"/>
<dbReference type="RGD" id="621716">
    <property type="gene designation" value="Foxd4"/>
</dbReference>
<dbReference type="InParanoid" id="Q63249"/>
<dbReference type="OrthoDB" id="5402974at2759"/>
<dbReference type="PhylomeDB" id="Q63249"/>
<dbReference type="TreeFam" id="TF316127"/>
<dbReference type="Proteomes" id="UP000002494">
    <property type="component" value="Unplaced"/>
</dbReference>
<dbReference type="GO" id="GO:0005634">
    <property type="term" value="C:nucleus"/>
    <property type="evidence" value="ECO:0007669"/>
    <property type="project" value="UniProtKB-SubCell"/>
</dbReference>
<dbReference type="GO" id="GO:0003700">
    <property type="term" value="F:DNA-binding transcription factor activity"/>
    <property type="evidence" value="ECO:0007669"/>
    <property type="project" value="InterPro"/>
</dbReference>
<dbReference type="GO" id="GO:0043565">
    <property type="term" value="F:sequence-specific DNA binding"/>
    <property type="evidence" value="ECO:0007669"/>
    <property type="project" value="InterPro"/>
</dbReference>
<dbReference type="CDD" id="cd20048">
    <property type="entry name" value="FH_FOXD4-like"/>
    <property type="match status" value="1"/>
</dbReference>
<dbReference type="FunFam" id="1.10.10.10:FF:000016">
    <property type="entry name" value="Forkhead box protein I1"/>
    <property type="match status" value="1"/>
</dbReference>
<dbReference type="Gene3D" id="1.10.10.10">
    <property type="entry name" value="Winged helix-like DNA-binding domain superfamily/Winged helix DNA-binding domain"/>
    <property type="match status" value="1"/>
</dbReference>
<dbReference type="InterPro" id="IPR001766">
    <property type="entry name" value="Fork_head_dom"/>
</dbReference>
<dbReference type="InterPro" id="IPR050211">
    <property type="entry name" value="FOX_domain-containing"/>
</dbReference>
<dbReference type="InterPro" id="IPR018122">
    <property type="entry name" value="TF_fork_head_CS_1"/>
</dbReference>
<dbReference type="InterPro" id="IPR030456">
    <property type="entry name" value="TF_fork_head_CS_2"/>
</dbReference>
<dbReference type="InterPro" id="IPR036388">
    <property type="entry name" value="WH-like_DNA-bd_sf"/>
</dbReference>
<dbReference type="InterPro" id="IPR036390">
    <property type="entry name" value="WH_DNA-bd_sf"/>
</dbReference>
<dbReference type="PANTHER" id="PTHR11829">
    <property type="entry name" value="FORKHEAD BOX PROTEIN"/>
    <property type="match status" value="1"/>
</dbReference>
<dbReference type="PANTHER" id="PTHR11829:SF361">
    <property type="entry name" value="FORKHEAD BOX PROTEIN D4-LIKE 1"/>
    <property type="match status" value="1"/>
</dbReference>
<dbReference type="Pfam" id="PF00250">
    <property type="entry name" value="Forkhead"/>
    <property type="match status" value="1"/>
</dbReference>
<dbReference type="PRINTS" id="PR00053">
    <property type="entry name" value="FORKHEAD"/>
</dbReference>
<dbReference type="SMART" id="SM00339">
    <property type="entry name" value="FH"/>
    <property type="match status" value="1"/>
</dbReference>
<dbReference type="SUPFAM" id="SSF46785">
    <property type="entry name" value="Winged helix' DNA-binding domain"/>
    <property type="match status" value="1"/>
</dbReference>
<dbReference type="PROSITE" id="PS00657">
    <property type="entry name" value="FORK_HEAD_1"/>
    <property type="match status" value="1"/>
</dbReference>
<dbReference type="PROSITE" id="PS00658">
    <property type="entry name" value="FORK_HEAD_2"/>
    <property type="match status" value="1"/>
</dbReference>
<dbReference type="PROSITE" id="PS50039">
    <property type="entry name" value="FORK_HEAD_3"/>
    <property type="match status" value="1"/>
</dbReference>
<reference key="1">
    <citation type="journal article" date="1993" name="Proc. Natl. Acad. Sci. U.S.A.">
        <title>Identification of nine tissue-specific transcription factors of the hepatocyte nuclear factor 3/forkhead DNA-binding-domain family.</title>
        <authorList>
            <person name="Clevidence D.E."/>
            <person name="Overdier D.G."/>
            <person name="Tao W."/>
            <person name="Qian X."/>
            <person name="Pani L."/>
            <person name="Lai E."/>
            <person name="Costa R.H."/>
        </authorList>
    </citation>
    <scope>NUCLEOTIDE SEQUENCE [MRNA]</scope>
    <source>
        <strain>Sprague-Dawley</strain>
    </source>
</reference>
<accession>Q63249</accession>
<proteinExistence type="evidence at transcript level"/>
<organism>
    <name type="scientific">Rattus norvegicus</name>
    <name type="common">Rat</name>
    <dbReference type="NCBI Taxonomy" id="10116"/>
    <lineage>
        <taxon>Eukaryota</taxon>
        <taxon>Metazoa</taxon>
        <taxon>Chordata</taxon>
        <taxon>Craniata</taxon>
        <taxon>Vertebrata</taxon>
        <taxon>Euteleostomi</taxon>
        <taxon>Mammalia</taxon>
        <taxon>Eutheria</taxon>
        <taxon>Euarchontoglires</taxon>
        <taxon>Glires</taxon>
        <taxon>Rodentia</taxon>
        <taxon>Myomorpha</taxon>
        <taxon>Muroidea</taxon>
        <taxon>Muridae</taxon>
        <taxon>Murinae</taxon>
        <taxon>Rattus</taxon>
    </lineage>
</organism>